<accession>A9BHQ2</accession>
<comment type="function">
    <text evidence="1">The alpha subunit is responsible for the aldol cleavage of indoleglycerol phosphate to indole and glyceraldehyde 3-phosphate.</text>
</comment>
<comment type="catalytic activity">
    <reaction evidence="1">
        <text>(1S,2R)-1-C-(indol-3-yl)glycerol 3-phosphate + L-serine = D-glyceraldehyde 3-phosphate + L-tryptophan + H2O</text>
        <dbReference type="Rhea" id="RHEA:10532"/>
        <dbReference type="ChEBI" id="CHEBI:15377"/>
        <dbReference type="ChEBI" id="CHEBI:33384"/>
        <dbReference type="ChEBI" id="CHEBI:57912"/>
        <dbReference type="ChEBI" id="CHEBI:58866"/>
        <dbReference type="ChEBI" id="CHEBI:59776"/>
        <dbReference type="EC" id="4.2.1.20"/>
    </reaction>
</comment>
<comment type="pathway">
    <text evidence="1">Amino-acid biosynthesis; L-tryptophan biosynthesis; L-tryptophan from chorismate: step 5/5.</text>
</comment>
<comment type="subunit">
    <text evidence="1">Tetramer of two alpha and two beta chains.</text>
</comment>
<comment type="similarity">
    <text evidence="1">Belongs to the TrpA family.</text>
</comment>
<evidence type="ECO:0000255" key="1">
    <source>
        <dbReference type="HAMAP-Rule" id="MF_00131"/>
    </source>
</evidence>
<reference key="1">
    <citation type="submission" date="2007-11" db="EMBL/GenBank/DDBJ databases">
        <title>Complete sequence of Petroga mobilis SJ95.</title>
        <authorList>
            <consortium name="US DOE Joint Genome Institute"/>
            <person name="Copeland A."/>
            <person name="Lucas S."/>
            <person name="Lapidus A."/>
            <person name="Barry K."/>
            <person name="Glavina del Rio T."/>
            <person name="Dalin E."/>
            <person name="Tice H."/>
            <person name="Pitluck S."/>
            <person name="Meincke L."/>
            <person name="Brettin T."/>
            <person name="Bruce D."/>
            <person name="Detter J.C."/>
            <person name="Han C."/>
            <person name="Kuske C.R."/>
            <person name="Schmutz J."/>
            <person name="Larimer F."/>
            <person name="Land M."/>
            <person name="Hauser L."/>
            <person name="Kyrpides N."/>
            <person name="Mikhailova N."/>
            <person name="Noll K."/>
            <person name="Richardson P."/>
        </authorList>
    </citation>
    <scope>NUCLEOTIDE SEQUENCE [LARGE SCALE GENOMIC DNA]</scope>
    <source>
        <strain>DSM 10674 / SJ95</strain>
    </source>
</reference>
<proteinExistence type="inferred from homology"/>
<feature type="chain" id="PRO_1000076360" description="Tryptophan synthase alpha chain">
    <location>
        <begin position="1"/>
        <end position="258"/>
    </location>
</feature>
<feature type="active site" description="Proton acceptor" evidence="1">
    <location>
        <position position="44"/>
    </location>
</feature>
<feature type="active site" description="Proton acceptor" evidence="1">
    <location>
        <position position="55"/>
    </location>
</feature>
<dbReference type="EC" id="4.2.1.20" evidence="1"/>
<dbReference type="EMBL" id="CP000879">
    <property type="protein sequence ID" value="ABX31924.1"/>
    <property type="molecule type" value="Genomic_DNA"/>
</dbReference>
<dbReference type="RefSeq" id="WP_012209024.1">
    <property type="nucleotide sequence ID" value="NC_010003.1"/>
</dbReference>
<dbReference type="SMR" id="A9BHQ2"/>
<dbReference type="STRING" id="403833.Pmob_1207"/>
<dbReference type="KEGG" id="pmo:Pmob_1207"/>
<dbReference type="eggNOG" id="COG0159">
    <property type="taxonomic scope" value="Bacteria"/>
</dbReference>
<dbReference type="HOGENOM" id="CLU_016734_0_0_0"/>
<dbReference type="OrthoDB" id="9804578at2"/>
<dbReference type="UniPathway" id="UPA00035">
    <property type="reaction ID" value="UER00044"/>
</dbReference>
<dbReference type="Proteomes" id="UP000000789">
    <property type="component" value="Chromosome"/>
</dbReference>
<dbReference type="GO" id="GO:0005829">
    <property type="term" value="C:cytosol"/>
    <property type="evidence" value="ECO:0007669"/>
    <property type="project" value="TreeGrafter"/>
</dbReference>
<dbReference type="GO" id="GO:0004834">
    <property type="term" value="F:tryptophan synthase activity"/>
    <property type="evidence" value="ECO:0007669"/>
    <property type="project" value="UniProtKB-UniRule"/>
</dbReference>
<dbReference type="CDD" id="cd04724">
    <property type="entry name" value="Tryptophan_synthase_alpha"/>
    <property type="match status" value="1"/>
</dbReference>
<dbReference type="FunFam" id="3.20.20.70:FF:000037">
    <property type="entry name" value="Tryptophan synthase alpha chain"/>
    <property type="match status" value="1"/>
</dbReference>
<dbReference type="Gene3D" id="3.20.20.70">
    <property type="entry name" value="Aldolase class I"/>
    <property type="match status" value="1"/>
</dbReference>
<dbReference type="HAMAP" id="MF_00131">
    <property type="entry name" value="Trp_synth_alpha"/>
    <property type="match status" value="1"/>
</dbReference>
<dbReference type="InterPro" id="IPR013785">
    <property type="entry name" value="Aldolase_TIM"/>
</dbReference>
<dbReference type="InterPro" id="IPR011060">
    <property type="entry name" value="RibuloseP-bd_barrel"/>
</dbReference>
<dbReference type="InterPro" id="IPR018204">
    <property type="entry name" value="Trp_synthase_alpha_AS"/>
</dbReference>
<dbReference type="InterPro" id="IPR002028">
    <property type="entry name" value="Trp_synthase_suA"/>
</dbReference>
<dbReference type="NCBIfam" id="TIGR00262">
    <property type="entry name" value="trpA"/>
    <property type="match status" value="1"/>
</dbReference>
<dbReference type="PANTHER" id="PTHR43406:SF1">
    <property type="entry name" value="TRYPTOPHAN SYNTHASE ALPHA CHAIN, CHLOROPLASTIC"/>
    <property type="match status" value="1"/>
</dbReference>
<dbReference type="PANTHER" id="PTHR43406">
    <property type="entry name" value="TRYPTOPHAN SYNTHASE, ALPHA CHAIN"/>
    <property type="match status" value="1"/>
</dbReference>
<dbReference type="Pfam" id="PF00290">
    <property type="entry name" value="Trp_syntA"/>
    <property type="match status" value="1"/>
</dbReference>
<dbReference type="SUPFAM" id="SSF51366">
    <property type="entry name" value="Ribulose-phoshate binding barrel"/>
    <property type="match status" value="1"/>
</dbReference>
<dbReference type="PROSITE" id="PS00167">
    <property type="entry name" value="TRP_SYNTHASE_ALPHA"/>
    <property type="match status" value="1"/>
</dbReference>
<organism>
    <name type="scientific">Petrotoga mobilis (strain DSM 10674 / SJ95)</name>
    <dbReference type="NCBI Taxonomy" id="403833"/>
    <lineage>
        <taxon>Bacteria</taxon>
        <taxon>Thermotogati</taxon>
        <taxon>Thermotogota</taxon>
        <taxon>Thermotogae</taxon>
        <taxon>Petrotogales</taxon>
        <taxon>Petrotogaceae</taxon>
        <taxon>Petrotoga</taxon>
    </lineage>
</organism>
<keyword id="KW-0028">Amino-acid biosynthesis</keyword>
<keyword id="KW-0057">Aromatic amino acid biosynthesis</keyword>
<keyword id="KW-0456">Lyase</keyword>
<keyword id="KW-0822">Tryptophan biosynthesis</keyword>
<protein>
    <recommendedName>
        <fullName evidence="1">Tryptophan synthase alpha chain</fullName>
        <ecNumber evidence="1">4.2.1.20</ecNumber>
    </recommendedName>
</protein>
<sequence>MSKISEVFKNSKALITYVTAGDPNLEVTKEIILELNKDGVDIIEVGIPFSDPLADGPIIQKASQKALKNGVTLKKIFETLNEIKEEVTCPLVLMGYYNSILNYGIDNFITEAVNTGISGVIIPDLPFDEEEEFYAKIKENGIDPILLVAPNTSEERLKEISKVCSGFLYCVSIMGVTGDSQAPMEHLKEYSQRVRKYVNIPLAIGFGIDSPTKAKNIIEYFDGIIVGSALIKIIDENSDDKGKLLKEIKRFTKSLKVW</sequence>
<gene>
    <name evidence="1" type="primary">trpA</name>
    <name type="ordered locus">Pmob_1207</name>
</gene>
<name>TRPA_PETMO</name>